<feature type="chain" id="PRO_0000072353" description="Swarming motility protein SwrAA">
    <location>
        <begin position="1"/>
        <end position="117"/>
    </location>
</feature>
<feature type="sequence variant" description="In strain: 3610.">
    <original>M</original>
    <variation>A</variation>
    <location>
        <position position="69"/>
    </location>
</feature>
<accession>O32266</accession>
<gene>
    <name type="primary">swrAA</name>
    <name type="synonym">swrA</name>
    <name type="ordered locus">BSU35230</name>
</gene>
<proteinExistence type="predicted"/>
<evidence type="ECO:0000269" key="1">
    <source>
    </source>
</evidence>
<organism>
    <name type="scientific">Bacillus subtilis (strain 168)</name>
    <dbReference type="NCBI Taxonomy" id="224308"/>
    <lineage>
        <taxon>Bacteria</taxon>
        <taxon>Bacillati</taxon>
        <taxon>Bacillota</taxon>
        <taxon>Bacilli</taxon>
        <taxon>Bacillales</taxon>
        <taxon>Bacillaceae</taxon>
        <taxon>Bacillus</taxon>
    </lineage>
</organism>
<name>SWRAA_BACSU</name>
<comment type="function">
    <text evidence="1">Required for swarm cell differentiation. Plays a crucial role in regulating the degree of cell flagellation.</text>
</comment>
<comment type="subcellular location">
    <subcellularLocation>
        <location evidence="1">Cytoplasm</location>
    </subcellularLocation>
</comment>
<comment type="miscellaneous">
    <text>This protein is functional in undomesticated strains of B.subtilis but not in laboratory strains, such as 168, because of a frameshift mutation. Therefore laboratory strains of B.subtilis are unable to swarm.</text>
</comment>
<comment type="miscellaneous">
    <text>The frameshift in strain 168 is caused by a single insertion of an adenine in the codon for Tyr-12 which leads to the premature truncation of the protein in residue 13. In addition, the C-terminal section of swrAA was predicted to be an ORF (yvzD) by the genome project.</text>
</comment>
<keyword id="KW-0963">Cytoplasm</keyword>
<keyword id="KW-1185">Reference proteome</keyword>
<reference key="1">
    <citation type="journal article" date="2004" name="Mol. Microbiol.">
        <title>Genes governing swarming in Bacillus subtilis and evidence for a phase variation mechanism controlling surface motility.</title>
        <authorList>
            <person name="Kearns D.B."/>
            <person name="Chu F."/>
            <person name="Rudner R."/>
            <person name="Losick R."/>
        </authorList>
    </citation>
    <scope>NUCLEOTIDE SEQUENCE [GENOMIC DNA]</scope>
    <scope>DETERMINATION OF THE TRANSLATIONAL START SITE</scope>
    <scope>IDENTIFICATION OF THE FRAMESHIFTED PROTEIN IN LABORATORY STRAINS</scope>
    <source>
        <strain>168</strain>
        <strain>168 / PY79</strain>
        <strain>3610</strain>
    </source>
</reference>
<reference key="2">
    <citation type="journal article" date="1997" name="Nature">
        <title>The complete genome sequence of the Gram-positive bacterium Bacillus subtilis.</title>
        <authorList>
            <person name="Kunst F."/>
            <person name="Ogasawara N."/>
            <person name="Moszer I."/>
            <person name="Albertini A.M."/>
            <person name="Alloni G."/>
            <person name="Azevedo V."/>
            <person name="Bertero M.G."/>
            <person name="Bessieres P."/>
            <person name="Bolotin A."/>
            <person name="Borchert S."/>
            <person name="Borriss R."/>
            <person name="Boursier L."/>
            <person name="Brans A."/>
            <person name="Braun M."/>
            <person name="Brignell S.C."/>
            <person name="Bron S."/>
            <person name="Brouillet S."/>
            <person name="Bruschi C.V."/>
            <person name="Caldwell B."/>
            <person name="Capuano V."/>
            <person name="Carter N.M."/>
            <person name="Choi S.-K."/>
            <person name="Codani J.-J."/>
            <person name="Connerton I.F."/>
            <person name="Cummings N.J."/>
            <person name="Daniel R.A."/>
            <person name="Denizot F."/>
            <person name="Devine K.M."/>
            <person name="Duesterhoeft A."/>
            <person name="Ehrlich S.D."/>
            <person name="Emmerson P.T."/>
            <person name="Entian K.-D."/>
            <person name="Errington J."/>
            <person name="Fabret C."/>
            <person name="Ferrari E."/>
            <person name="Foulger D."/>
            <person name="Fritz C."/>
            <person name="Fujita M."/>
            <person name="Fujita Y."/>
            <person name="Fuma S."/>
            <person name="Galizzi A."/>
            <person name="Galleron N."/>
            <person name="Ghim S.-Y."/>
            <person name="Glaser P."/>
            <person name="Goffeau A."/>
            <person name="Golightly E.J."/>
            <person name="Grandi G."/>
            <person name="Guiseppi G."/>
            <person name="Guy B.J."/>
            <person name="Haga K."/>
            <person name="Haiech J."/>
            <person name="Harwood C.R."/>
            <person name="Henaut A."/>
            <person name="Hilbert H."/>
            <person name="Holsappel S."/>
            <person name="Hosono S."/>
            <person name="Hullo M.-F."/>
            <person name="Itaya M."/>
            <person name="Jones L.-M."/>
            <person name="Joris B."/>
            <person name="Karamata D."/>
            <person name="Kasahara Y."/>
            <person name="Klaerr-Blanchard M."/>
            <person name="Klein C."/>
            <person name="Kobayashi Y."/>
            <person name="Koetter P."/>
            <person name="Koningstein G."/>
            <person name="Krogh S."/>
            <person name="Kumano M."/>
            <person name="Kurita K."/>
            <person name="Lapidus A."/>
            <person name="Lardinois S."/>
            <person name="Lauber J."/>
            <person name="Lazarevic V."/>
            <person name="Lee S.-M."/>
            <person name="Levine A."/>
            <person name="Liu H."/>
            <person name="Masuda S."/>
            <person name="Mauel C."/>
            <person name="Medigue C."/>
            <person name="Medina N."/>
            <person name="Mellado R.P."/>
            <person name="Mizuno M."/>
            <person name="Moestl D."/>
            <person name="Nakai S."/>
            <person name="Noback M."/>
            <person name="Noone D."/>
            <person name="O'Reilly M."/>
            <person name="Ogawa K."/>
            <person name="Ogiwara A."/>
            <person name="Oudega B."/>
            <person name="Park S.-H."/>
            <person name="Parro V."/>
            <person name="Pohl T.M."/>
            <person name="Portetelle D."/>
            <person name="Porwollik S."/>
            <person name="Prescott A.M."/>
            <person name="Presecan E."/>
            <person name="Pujic P."/>
            <person name="Purnelle B."/>
            <person name="Rapoport G."/>
            <person name="Rey M."/>
            <person name="Reynolds S."/>
            <person name="Rieger M."/>
            <person name="Rivolta C."/>
            <person name="Rocha E."/>
            <person name="Roche B."/>
            <person name="Rose M."/>
            <person name="Sadaie Y."/>
            <person name="Sato T."/>
            <person name="Scanlan E."/>
            <person name="Schleich S."/>
            <person name="Schroeter R."/>
            <person name="Scoffone F."/>
            <person name="Sekiguchi J."/>
            <person name="Sekowska A."/>
            <person name="Seror S.J."/>
            <person name="Serror P."/>
            <person name="Shin B.-S."/>
            <person name="Soldo B."/>
            <person name="Sorokin A."/>
            <person name="Tacconi E."/>
            <person name="Takagi T."/>
            <person name="Takahashi H."/>
            <person name="Takemaru K."/>
            <person name="Takeuchi M."/>
            <person name="Tamakoshi A."/>
            <person name="Tanaka T."/>
            <person name="Terpstra P."/>
            <person name="Tognoni A."/>
            <person name="Tosato V."/>
            <person name="Uchiyama S."/>
            <person name="Vandenbol M."/>
            <person name="Vannier F."/>
            <person name="Vassarotti A."/>
            <person name="Viari A."/>
            <person name="Wambutt R."/>
            <person name="Wedler E."/>
            <person name="Wedler H."/>
            <person name="Weitzenegger T."/>
            <person name="Winters P."/>
            <person name="Wipat A."/>
            <person name="Yamamoto H."/>
            <person name="Yamane K."/>
            <person name="Yasumoto K."/>
            <person name="Yata K."/>
            <person name="Yoshida K."/>
            <person name="Yoshikawa H.-F."/>
            <person name="Zumstein E."/>
            <person name="Yoshikawa H."/>
            <person name="Danchin A."/>
        </authorList>
    </citation>
    <scope>NUCLEOTIDE SEQUENCE [LARGE SCALE GENOMIC DNA]</scope>
    <source>
        <strain>168</strain>
    </source>
</reference>
<reference key="3">
    <citation type="journal article" date="2005" name="J. Bacteriol.">
        <title>Swarming differentiation and swimming motility in Bacillus subtilis are controlled by swrA, a newly identified dicistronic operon.</title>
        <authorList>
            <person name="Calvio C."/>
            <person name="Celandroni F."/>
            <person name="Ghelardi E."/>
            <person name="Amati G."/>
            <person name="Salvetti S."/>
            <person name="Ceciliani F."/>
            <person name="Galizzi A."/>
            <person name="Senesi S."/>
        </authorList>
    </citation>
    <scope>FUNCTION</scope>
    <scope>SUBCELLULAR LOCATION</scope>
</reference>
<sequence>MKRASIVREKKYYELVEQLKDRTQDVTFSATKALSLLMLFSRYLVNYTNVESVNDINEECAKHYFNYLMKNHKRLGINLTDIKRSMHLISGLLDVDVNHYLKDFSLSNVTLWMTQER</sequence>
<dbReference type="EMBL" id="AL009126">
    <property type="protein sequence ID" value="CAB15540.1"/>
    <property type="status" value="ALT_SEQ"/>
    <property type="molecule type" value="Genomic_DNA"/>
</dbReference>
<dbReference type="PIR" id="H70049">
    <property type="entry name" value="H70049"/>
</dbReference>
<dbReference type="RefSeq" id="WP_015251121.1">
    <property type="nucleotide sequence ID" value="NZ_CP103783.1"/>
</dbReference>
<dbReference type="SMR" id="O32266"/>
<dbReference type="FunCoup" id="O32266">
    <property type="interactions" value="60"/>
</dbReference>
<dbReference type="GeneID" id="86871875"/>
<dbReference type="InParanoid" id="O32266"/>
<dbReference type="Proteomes" id="UP000001570">
    <property type="component" value="Chromosome"/>
</dbReference>
<dbReference type="GO" id="GO:0005737">
    <property type="term" value="C:cytoplasm"/>
    <property type="evidence" value="ECO:0007669"/>
    <property type="project" value="UniProtKB-SubCell"/>
</dbReference>
<dbReference type="GO" id="GO:1900192">
    <property type="term" value="P:positive regulation of single-species biofilm formation"/>
    <property type="evidence" value="ECO:0000315"/>
    <property type="project" value="CACAO"/>
</dbReference>
<dbReference type="InterPro" id="IPR035388">
    <property type="entry name" value="SwrA"/>
</dbReference>
<dbReference type="Pfam" id="PF17423">
    <property type="entry name" value="SwrA"/>
    <property type="match status" value="1"/>
</dbReference>
<protein>
    <recommendedName>
        <fullName>Swarming motility protein SwrAA</fullName>
    </recommendedName>
</protein>